<evidence type="ECO:0000255" key="1">
    <source>
        <dbReference type="HAMAP-Rule" id="MF_02113"/>
    </source>
</evidence>
<gene>
    <name evidence="1" type="primary">prcB2</name>
    <name type="synonym">prcB1</name>
    <name type="ordered locus">SAV_6681</name>
</gene>
<feature type="propeptide" id="PRO_0000397584" description="Removed in mature form; by autocatalysis" evidence="1">
    <location>
        <begin position="1"/>
        <end position="53"/>
    </location>
</feature>
<feature type="chain" id="PRO_0000397585" description="Proteasome subunit beta 2">
    <location>
        <begin position="54"/>
        <end position="281"/>
    </location>
</feature>
<feature type="active site" description="Nucleophile" evidence="1">
    <location>
        <position position="54"/>
    </location>
</feature>
<organism>
    <name type="scientific">Streptomyces avermitilis (strain ATCC 31267 / DSM 46492 / JCM 5070 / NBRC 14893 / NCIMB 12804 / NRRL 8165 / MA-4680)</name>
    <dbReference type="NCBI Taxonomy" id="227882"/>
    <lineage>
        <taxon>Bacteria</taxon>
        <taxon>Bacillati</taxon>
        <taxon>Actinomycetota</taxon>
        <taxon>Actinomycetes</taxon>
        <taxon>Kitasatosporales</taxon>
        <taxon>Streptomycetaceae</taxon>
        <taxon>Streptomyces</taxon>
    </lineage>
</organism>
<keyword id="KW-0068">Autocatalytic cleavage</keyword>
<keyword id="KW-0963">Cytoplasm</keyword>
<keyword id="KW-0378">Hydrolase</keyword>
<keyword id="KW-0645">Protease</keyword>
<keyword id="KW-0647">Proteasome</keyword>
<keyword id="KW-1185">Reference proteome</keyword>
<keyword id="KW-0888">Threonine protease</keyword>
<keyword id="KW-0865">Zymogen</keyword>
<accession>Q828I8</accession>
<proteinExistence type="inferred from homology"/>
<sequence>MEANTRSTGRLPAAFLTPGSSSFMDFLSEHQPEILPGNRQLPPTQGVIEAPHGTTIVATTFPGGVVLAGDRRATMGNVIAQRDIEKVFPADEYSAVGIAGTAGLAVEMVKLFQLELEHFEKVEGATLSLEGKANRLSTMIRSNLAMAMQGLAVVPLFAGYDVDREKGRIFSYDVTGGRSEEHGYASTGSGSIFARGAMKKLYRDDLTEQQATTLVIQALYDAADDDSATGGPDVARRIYPIVTVITEDGFRRLTDEESSEIARAILERRLEQPDGPRAALL</sequence>
<dbReference type="EC" id="3.4.25.1" evidence="1"/>
<dbReference type="EMBL" id="BA000030">
    <property type="protein sequence ID" value="BAC74392.1"/>
    <property type="molecule type" value="Genomic_DNA"/>
</dbReference>
<dbReference type="SMR" id="Q828I8"/>
<dbReference type="MEROPS" id="T01.005"/>
<dbReference type="GeneID" id="41543751"/>
<dbReference type="KEGG" id="sma:SAVERM_6681"/>
<dbReference type="eggNOG" id="COG0638">
    <property type="taxonomic scope" value="Bacteria"/>
</dbReference>
<dbReference type="HOGENOM" id="CLU_035750_2_0_11"/>
<dbReference type="OrthoDB" id="5174038at2"/>
<dbReference type="UniPathway" id="UPA00997"/>
<dbReference type="Proteomes" id="UP000000428">
    <property type="component" value="Chromosome"/>
</dbReference>
<dbReference type="GO" id="GO:0005737">
    <property type="term" value="C:cytoplasm"/>
    <property type="evidence" value="ECO:0007669"/>
    <property type="project" value="UniProtKB-SubCell"/>
</dbReference>
<dbReference type="GO" id="GO:0019774">
    <property type="term" value="C:proteasome core complex, beta-subunit complex"/>
    <property type="evidence" value="ECO:0007669"/>
    <property type="project" value="UniProtKB-UniRule"/>
</dbReference>
<dbReference type="GO" id="GO:0004298">
    <property type="term" value="F:threonine-type endopeptidase activity"/>
    <property type="evidence" value="ECO:0007669"/>
    <property type="project" value="UniProtKB-UniRule"/>
</dbReference>
<dbReference type="GO" id="GO:0019941">
    <property type="term" value="P:modification-dependent protein catabolic process"/>
    <property type="evidence" value="ECO:0007669"/>
    <property type="project" value="UniProtKB-UniRule"/>
</dbReference>
<dbReference type="GO" id="GO:0010498">
    <property type="term" value="P:proteasomal protein catabolic process"/>
    <property type="evidence" value="ECO:0007669"/>
    <property type="project" value="UniProtKB-UniRule"/>
</dbReference>
<dbReference type="CDD" id="cd01906">
    <property type="entry name" value="proteasome_protease_HslV"/>
    <property type="match status" value="1"/>
</dbReference>
<dbReference type="FunFam" id="3.60.20.10:FF:000046">
    <property type="entry name" value="Proteasome subunit beta"/>
    <property type="match status" value="1"/>
</dbReference>
<dbReference type="Gene3D" id="3.60.20.10">
    <property type="entry name" value="Glutamine Phosphoribosylpyrophosphate, subunit 1, domain 1"/>
    <property type="match status" value="1"/>
</dbReference>
<dbReference type="HAMAP" id="MF_02113_B">
    <property type="entry name" value="Proteasome_B_B"/>
    <property type="match status" value="1"/>
</dbReference>
<dbReference type="InterPro" id="IPR029055">
    <property type="entry name" value="Ntn_hydrolases_N"/>
</dbReference>
<dbReference type="InterPro" id="IPR000243">
    <property type="entry name" value="Pept_T1A_subB"/>
</dbReference>
<dbReference type="InterPro" id="IPR001353">
    <property type="entry name" value="Proteasome_sua/b"/>
</dbReference>
<dbReference type="InterPro" id="IPR023333">
    <property type="entry name" value="Proteasome_suB-type"/>
</dbReference>
<dbReference type="InterPro" id="IPR022483">
    <property type="entry name" value="PSB_actinobac"/>
</dbReference>
<dbReference type="NCBIfam" id="TIGR03690">
    <property type="entry name" value="20S_bact_beta"/>
    <property type="match status" value="1"/>
</dbReference>
<dbReference type="PANTHER" id="PTHR32194:SF0">
    <property type="entry name" value="ATP-DEPENDENT PROTEASE SUBUNIT HSLV"/>
    <property type="match status" value="1"/>
</dbReference>
<dbReference type="PANTHER" id="PTHR32194">
    <property type="entry name" value="METALLOPROTEASE TLDD"/>
    <property type="match status" value="1"/>
</dbReference>
<dbReference type="Pfam" id="PF00227">
    <property type="entry name" value="Proteasome"/>
    <property type="match status" value="1"/>
</dbReference>
<dbReference type="PRINTS" id="PR00141">
    <property type="entry name" value="PROTEASOME"/>
</dbReference>
<dbReference type="SUPFAM" id="SSF56235">
    <property type="entry name" value="N-terminal nucleophile aminohydrolases (Ntn hydrolases)"/>
    <property type="match status" value="1"/>
</dbReference>
<dbReference type="PROSITE" id="PS51476">
    <property type="entry name" value="PROTEASOME_BETA_2"/>
    <property type="match status" value="1"/>
</dbReference>
<reference key="1">
    <citation type="journal article" date="2001" name="Proc. Natl. Acad. Sci. U.S.A.">
        <title>Genome sequence of an industrial microorganism Streptomyces avermitilis: deducing the ability of producing secondary metabolites.</title>
        <authorList>
            <person name="Omura S."/>
            <person name="Ikeda H."/>
            <person name="Ishikawa J."/>
            <person name="Hanamoto A."/>
            <person name="Takahashi C."/>
            <person name="Shinose M."/>
            <person name="Takahashi Y."/>
            <person name="Horikawa H."/>
            <person name="Nakazawa H."/>
            <person name="Osonoe T."/>
            <person name="Kikuchi H."/>
            <person name="Shiba T."/>
            <person name="Sakaki Y."/>
            <person name="Hattori M."/>
        </authorList>
    </citation>
    <scope>NUCLEOTIDE SEQUENCE [LARGE SCALE GENOMIC DNA]</scope>
    <source>
        <strain>ATCC 31267 / DSM 46492 / JCM 5070 / NBRC 14893 / NCIMB 12804 / NRRL 8165 / MA-4680</strain>
    </source>
</reference>
<reference key="2">
    <citation type="journal article" date="2003" name="Nat. Biotechnol.">
        <title>Complete genome sequence and comparative analysis of the industrial microorganism Streptomyces avermitilis.</title>
        <authorList>
            <person name="Ikeda H."/>
            <person name="Ishikawa J."/>
            <person name="Hanamoto A."/>
            <person name="Shinose M."/>
            <person name="Kikuchi H."/>
            <person name="Shiba T."/>
            <person name="Sakaki Y."/>
            <person name="Hattori M."/>
            <person name="Omura S."/>
        </authorList>
    </citation>
    <scope>NUCLEOTIDE SEQUENCE [LARGE SCALE GENOMIC DNA]</scope>
    <source>
        <strain>ATCC 31267 / DSM 46492 / JCM 5070 / NBRC 14893 / NCIMB 12804 / NRRL 8165 / MA-4680</strain>
    </source>
</reference>
<name>PSB2_STRAW</name>
<protein>
    <recommendedName>
        <fullName evidence="1">Proteasome subunit beta 2</fullName>
        <ecNumber evidence="1">3.4.25.1</ecNumber>
    </recommendedName>
    <alternativeName>
        <fullName evidence="1">20S proteasome beta subunit 2</fullName>
    </alternativeName>
    <alternativeName>
        <fullName evidence="1">Proteasome core protein PrcB 2</fullName>
    </alternativeName>
</protein>
<comment type="function">
    <text evidence="1">Component of the proteasome core, a large protease complex with broad specificity involved in protein degradation.</text>
</comment>
<comment type="catalytic activity">
    <reaction evidence="1">
        <text>Cleavage of peptide bonds with very broad specificity.</text>
        <dbReference type="EC" id="3.4.25.1"/>
    </reaction>
</comment>
<comment type="activity regulation">
    <text evidence="1">The formation of the proteasomal ATPase ARC-20S proteasome complex, likely via the docking of the C-termini of ARC into the intersubunit pockets in the alpha-rings, may trigger opening of the gate for substrate entry. Interconversion between the open-gate and close-gate conformations leads to a dynamic regulation of the 20S proteasome proteolysis activity.</text>
</comment>
<comment type="pathway">
    <text evidence="1">Protein degradation; proteasomal Pup-dependent pathway.</text>
</comment>
<comment type="subunit">
    <text evidence="1">The 20S proteasome core is composed of 14 alpha and 14 beta subunits that assemble into four stacked heptameric rings, resulting in a barrel-shaped structure. The two inner rings, each composed of seven catalytic beta subunits, are sandwiched by two outer rings, each composed of seven alpha subunits. The catalytic chamber with the active sites is on the inside of the barrel. Has a gated structure, the ends of the cylinder being occluded by the N-termini of the alpha-subunits. Is capped by the proteasome-associated ATPase, ARC.</text>
</comment>
<comment type="subcellular location">
    <subcellularLocation>
        <location evidence="1">Cytoplasm</location>
    </subcellularLocation>
</comment>
<comment type="similarity">
    <text evidence="1">Belongs to the peptidase T1B family.</text>
</comment>